<gene>
    <name evidence="1" type="primary">mnmA</name>
    <name type="synonym">trmU</name>
    <name type="ordered locus">TW353</name>
</gene>
<proteinExistence type="inferred from homology"/>
<keyword id="KW-0067">ATP-binding</keyword>
<keyword id="KW-0963">Cytoplasm</keyword>
<keyword id="KW-1015">Disulfide bond</keyword>
<keyword id="KW-0547">Nucleotide-binding</keyword>
<keyword id="KW-0694">RNA-binding</keyword>
<keyword id="KW-0808">Transferase</keyword>
<keyword id="KW-0819">tRNA processing</keyword>
<keyword id="KW-0820">tRNA-binding</keyword>
<name>MNMA_TROW8</name>
<evidence type="ECO:0000255" key="1">
    <source>
        <dbReference type="HAMAP-Rule" id="MF_00144"/>
    </source>
</evidence>
<comment type="function">
    <text evidence="1">Catalyzes the 2-thiolation of uridine at the wobble position (U34) of tRNA, leading to the formation of s(2)U34.</text>
</comment>
<comment type="catalytic activity">
    <reaction evidence="1">
        <text>S-sulfanyl-L-cysteinyl-[protein] + uridine(34) in tRNA + AH2 + ATP = 2-thiouridine(34) in tRNA + L-cysteinyl-[protein] + A + AMP + diphosphate + H(+)</text>
        <dbReference type="Rhea" id="RHEA:47032"/>
        <dbReference type="Rhea" id="RHEA-COMP:10131"/>
        <dbReference type="Rhea" id="RHEA-COMP:11726"/>
        <dbReference type="Rhea" id="RHEA-COMP:11727"/>
        <dbReference type="Rhea" id="RHEA-COMP:11728"/>
        <dbReference type="ChEBI" id="CHEBI:13193"/>
        <dbReference type="ChEBI" id="CHEBI:15378"/>
        <dbReference type="ChEBI" id="CHEBI:17499"/>
        <dbReference type="ChEBI" id="CHEBI:29950"/>
        <dbReference type="ChEBI" id="CHEBI:30616"/>
        <dbReference type="ChEBI" id="CHEBI:33019"/>
        <dbReference type="ChEBI" id="CHEBI:61963"/>
        <dbReference type="ChEBI" id="CHEBI:65315"/>
        <dbReference type="ChEBI" id="CHEBI:87170"/>
        <dbReference type="ChEBI" id="CHEBI:456215"/>
        <dbReference type="EC" id="2.8.1.13"/>
    </reaction>
</comment>
<comment type="subcellular location">
    <subcellularLocation>
        <location evidence="1">Cytoplasm</location>
    </subcellularLocation>
</comment>
<comment type="similarity">
    <text evidence="1">Belongs to the MnmA/TRMU family.</text>
</comment>
<feature type="chain" id="PRO_1000009593" description="tRNA-specific 2-thiouridylase MnmA">
    <location>
        <begin position="1"/>
        <end position="359"/>
    </location>
</feature>
<feature type="region of interest" description="Interaction with tRNA" evidence="1">
    <location>
        <begin position="144"/>
        <end position="146"/>
    </location>
</feature>
<feature type="active site" description="Nucleophile" evidence="1">
    <location>
        <position position="97"/>
    </location>
</feature>
<feature type="active site" description="Cysteine persulfide intermediate" evidence="1">
    <location>
        <position position="195"/>
    </location>
</feature>
<feature type="binding site" evidence="1">
    <location>
        <begin position="6"/>
        <end position="13"/>
    </location>
    <ligand>
        <name>ATP</name>
        <dbReference type="ChEBI" id="CHEBI:30616"/>
    </ligand>
</feature>
<feature type="binding site" evidence="1">
    <location>
        <position position="32"/>
    </location>
    <ligand>
        <name>ATP</name>
        <dbReference type="ChEBI" id="CHEBI:30616"/>
    </ligand>
</feature>
<feature type="binding site" evidence="1">
    <location>
        <position position="121"/>
    </location>
    <ligand>
        <name>ATP</name>
        <dbReference type="ChEBI" id="CHEBI:30616"/>
    </ligand>
</feature>
<feature type="site" description="Interaction with tRNA" evidence="1">
    <location>
        <position position="122"/>
    </location>
</feature>
<feature type="site" description="Interaction with tRNA" evidence="1">
    <location>
        <position position="334"/>
    </location>
</feature>
<feature type="disulfide bond" description="Alternate" evidence="1">
    <location>
        <begin position="97"/>
        <end position="195"/>
    </location>
</feature>
<reference key="1">
    <citation type="journal article" date="2003" name="Lancet">
        <title>Sequencing and analysis of the genome of the Whipple's disease bacterium Tropheryma whipplei.</title>
        <authorList>
            <person name="Bentley S.D."/>
            <person name="Maiwald M."/>
            <person name="Murphy L.D."/>
            <person name="Pallen M.J."/>
            <person name="Yeats C.A."/>
            <person name="Dover L.G."/>
            <person name="Norbertczak H.T."/>
            <person name="Besra G.S."/>
            <person name="Quail M.A."/>
            <person name="Harris D.E."/>
            <person name="von Herbay A."/>
            <person name="Goble A."/>
            <person name="Rutter S."/>
            <person name="Squares R."/>
            <person name="Squares S."/>
            <person name="Barrell B.G."/>
            <person name="Parkhill J."/>
            <person name="Relman D.A."/>
        </authorList>
    </citation>
    <scope>NUCLEOTIDE SEQUENCE [LARGE SCALE GENOMIC DNA]</scope>
    <source>
        <strain>TW08/27</strain>
    </source>
</reference>
<sequence length="359" mass="39183">MKVLAAMSGGVDSAVAAARAVDMGHDVVGVHLALSRSASGKRGCCTPRDAQDAAQAAQTIGIPFYVWDFSEEFQEKVIDNFISEYSAGRTPNPCLRCNEHIKFSSLLRRALALGFDAVCTGHYARVFLDEDGTYQLHRASSWAKDQSYVLAVLQQAQLKHCYFPLGATPSKKLVRQEADERGLKVSKKPDSHDVCFIPSSNTGAWLSQRIGRRDGDIIDDLGQRVGSHTGAFAYTVGQRKGLRLSSPAWDGKPRYVLDIEPISNTVVVGPRESLRVDELSGAFTTTGWCFTSRPIECSVQVRAHSDPVSAIAFIRDDVLVVRPDEPVFAVAKGQSAAIYRGTRVLGQLMIDNTKKYASS</sequence>
<protein>
    <recommendedName>
        <fullName evidence="1">tRNA-specific 2-thiouridylase MnmA</fullName>
        <ecNumber evidence="1">2.8.1.13</ecNumber>
    </recommendedName>
</protein>
<organism>
    <name type="scientific">Tropheryma whipplei (strain TW08/27)</name>
    <name type="common">Whipple's bacillus</name>
    <dbReference type="NCBI Taxonomy" id="218496"/>
    <lineage>
        <taxon>Bacteria</taxon>
        <taxon>Bacillati</taxon>
        <taxon>Actinomycetota</taxon>
        <taxon>Actinomycetes</taxon>
        <taxon>Micrococcales</taxon>
        <taxon>Tropherymataceae</taxon>
        <taxon>Tropheryma</taxon>
    </lineage>
</organism>
<accession>Q83HX5</accession>
<dbReference type="EC" id="2.8.1.13" evidence="1"/>
<dbReference type="EMBL" id="BX251411">
    <property type="protein sequence ID" value="CAD67025.1"/>
    <property type="molecule type" value="Genomic_DNA"/>
</dbReference>
<dbReference type="RefSeq" id="WP_011096305.1">
    <property type="nucleotide sequence ID" value="NC_004551.1"/>
</dbReference>
<dbReference type="SMR" id="Q83HX5"/>
<dbReference type="GeneID" id="67388126"/>
<dbReference type="KEGG" id="tws:TW353"/>
<dbReference type="HOGENOM" id="CLU_035188_0_2_11"/>
<dbReference type="GO" id="GO:0005737">
    <property type="term" value="C:cytoplasm"/>
    <property type="evidence" value="ECO:0007669"/>
    <property type="project" value="UniProtKB-SubCell"/>
</dbReference>
<dbReference type="GO" id="GO:0005524">
    <property type="term" value="F:ATP binding"/>
    <property type="evidence" value="ECO:0007669"/>
    <property type="project" value="UniProtKB-KW"/>
</dbReference>
<dbReference type="GO" id="GO:0000049">
    <property type="term" value="F:tRNA binding"/>
    <property type="evidence" value="ECO:0007669"/>
    <property type="project" value="UniProtKB-KW"/>
</dbReference>
<dbReference type="GO" id="GO:0103016">
    <property type="term" value="F:tRNA-uridine 2-sulfurtransferase activity"/>
    <property type="evidence" value="ECO:0007669"/>
    <property type="project" value="UniProtKB-EC"/>
</dbReference>
<dbReference type="GO" id="GO:0002143">
    <property type="term" value="P:tRNA wobble position uridine thiolation"/>
    <property type="evidence" value="ECO:0007669"/>
    <property type="project" value="TreeGrafter"/>
</dbReference>
<dbReference type="CDD" id="cd01998">
    <property type="entry name" value="MnmA_TRMU-like"/>
    <property type="match status" value="1"/>
</dbReference>
<dbReference type="FunFam" id="3.40.50.620:FF:000057">
    <property type="entry name" value="tRNA-specific 2-thiouridylase MnmA"/>
    <property type="match status" value="1"/>
</dbReference>
<dbReference type="Gene3D" id="2.30.30.280">
    <property type="entry name" value="Adenine nucleotide alpha hydrolases-like domains"/>
    <property type="match status" value="1"/>
</dbReference>
<dbReference type="Gene3D" id="3.40.50.620">
    <property type="entry name" value="HUPs"/>
    <property type="match status" value="1"/>
</dbReference>
<dbReference type="Gene3D" id="2.40.30.10">
    <property type="entry name" value="Translation factors"/>
    <property type="match status" value="1"/>
</dbReference>
<dbReference type="HAMAP" id="MF_00144">
    <property type="entry name" value="tRNA_thiouridyl_MnmA"/>
    <property type="match status" value="1"/>
</dbReference>
<dbReference type="InterPro" id="IPR004506">
    <property type="entry name" value="MnmA-like"/>
</dbReference>
<dbReference type="InterPro" id="IPR046885">
    <property type="entry name" value="MnmA-like_C"/>
</dbReference>
<dbReference type="InterPro" id="IPR046884">
    <property type="entry name" value="MnmA-like_central"/>
</dbReference>
<dbReference type="InterPro" id="IPR023382">
    <property type="entry name" value="MnmA-like_central_sf"/>
</dbReference>
<dbReference type="InterPro" id="IPR014729">
    <property type="entry name" value="Rossmann-like_a/b/a_fold"/>
</dbReference>
<dbReference type="NCBIfam" id="NF001138">
    <property type="entry name" value="PRK00143.1"/>
    <property type="match status" value="1"/>
</dbReference>
<dbReference type="NCBIfam" id="TIGR00420">
    <property type="entry name" value="trmU"/>
    <property type="match status" value="1"/>
</dbReference>
<dbReference type="PANTHER" id="PTHR11933:SF5">
    <property type="entry name" value="MITOCHONDRIAL TRNA-SPECIFIC 2-THIOURIDYLASE 1"/>
    <property type="match status" value="1"/>
</dbReference>
<dbReference type="PANTHER" id="PTHR11933">
    <property type="entry name" value="TRNA 5-METHYLAMINOMETHYL-2-THIOURIDYLATE -METHYLTRANSFERASE"/>
    <property type="match status" value="1"/>
</dbReference>
<dbReference type="Pfam" id="PF03054">
    <property type="entry name" value="tRNA_Me_trans"/>
    <property type="match status" value="1"/>
</dbReference>
<dbReference type="Pfam" id="PF20258">
    <property type="entry name" value="tRNA_Me_trans_C"/>
    <property type="match status" value="1"/>
</dbReference>
<dbReference type="Pfam" id="PF20259">
    <property type="entry name" value="tRNA_Me_trans_M"/>
    <property type="match status" value="1"/>
</dbReference>
<dbReference type="SUPFAM" id="SSF52402">
    <property type="entry name" value="Adenine nucleotide alpha hydrolases-like"/>
    <property type="match status" value="1"/>
</dbReference>